<gene>
    <name evidence="1" type="primary">kdpA</name>
    <name type="ordered locus">YPTS_3031</name>
</gene>
<organism>
    <name type="scientific">Yersinia pseudotuberculosis serotype IB (strain PB1/+)</name>
    <dbReference type="NCBI Taxonomy" id="502801"/>
    <lineage>
        <taxon>Bacteria</taxon>
        <taxon>Pseudomonadati</taxon>
        <taxon>Pseudomonadota</taxon>
        <taxon>Gammaproteobacteria</taxon>
        <taxon>Enterobacterales</taxon>
        <taxon>Yersiniaceae</taxon>
        <taxon>Yersinia</taxon>
    </lineage>
</organism>
<comment type="function">
    <text evidence="1">Part of the high-affinity ATP-driven potassium transport (or Kdp) system, which catalyzes the hydrolysis of ATP coupled with the electrogenic transport of potassium into the cytoplasm. This subunit binds the periplasmic potassium ions and delivers the ions to the membrane domain of KdpB through an intramembrane tunnel.</text>
</comment>
<comment type="subunit">
    <text evidence="1">The system is composed of three essential subunits: KdpA, KdpB and KdpC.</text>
</comment>
<comment type="subcellular location">
    <subcellularLocation>
        <location evidence="1">Cell inner membrane</location>
        <topology evidence="1">Multi-pass membrane protein</topology>
    </subcellularLocation>
</comment>
<comment type="similarity">
    <text evidence="1">Belongs to the KdpA family.</text>
</comment>
<keyword id="KW-0997">Cell inner membrane</keyword>
<keyword id="KW-1003">Cell membrane</keyword>
<keyword id="KW-0406">Ion transport</keyword>
<keyword id="KW-0472">Membrane</keyword>
<keyword id="KW-0630">Potassium</keyword>
<keyword id="KW-0633">Potassium transport</keyword>
<keyword id="KW-0812">Transmembrane</keyword>
<keyword id="KW-1133">Transmembrane helix</keyword>
<keyword id="KW-0813">Transport</keyword>
<protein>
    <recommendedName>
        <fullName evidence="1">Potassium-transporting ATPase potassium-binding subunit</fullName>
    </recommendedName>
    <alternativeName>
        <fullName evidence="1">ATP phosphohydrolase [potassium-transporting] A chain</fullName>
    </alternativeName>
    <alternativeName>
        <fullName evidence="1">Potassium-binding and translocating subunit A</fullName>
    </alternativeName>
    <alternativeName>
        <fullName evidence="1">Potassium-translocating ATPase A chain</fullName>
    </alternativeName>
</protein>
<accession>B2KA77</accession>
<evidence type="ECO:0000255" key="1">
    <source>
        <dbReference type="HAMAP-Rule" id="MF_00275"/>
    </source>
</evidence>
<name>KDPA_YERPB</name>
<proteinExistence type="inferred from homology"/>
<sequence>MVASGFLLIASFMVVLFVLSRPLGGFLARLIEGEPFSALQKVEAGLWRCSGVKNAEMNGWQYALAILCFNLLGIVLLFVLLMTQGSLPLNPEHLPGMSWHLALNTAVSFVTNTNWQAYSGENTLSYLSQMAGLTVQNFLSAATGIAVAFALIRAFARHSATTLGNAWVDLVRITLYVLLPIALIIALIFVSQGVLQNLDGYLHITTLEGVQQTLPMGPVASQEAIKVLGTNGGGFFGANSAHPFENPTAFSNFVQMLAIFLIPCALCFAFGQVVGDNRQGHALIWAMSLIFIVAVVVVMYAELAGNPHLSPLGADSNSNMEGKESRFGILATSLYAVVTTAASCGAVNAMHDSFTALGGMIPLWLMQIGEVVFGGVGSGLYGMLLFVLLTVFIAGLMIGRTPEYLGKKIDVFDMKMTALAILVTPTIVLLGTALALCTEAGRAGILNPGAHGFSEVLYAFSSAANNNGSAFAGLSVNTPFYNLLLAAAMFIGRFGVILPVLAIASSLVAKKRQPAGNGTLPTGGPLFIGLLIGTVLLVGALTFIPALALGPVAEHLQVWLAH</sequence>
<feature type="chain" id="PRO_1000114708" description="Potassium-transporting ATPase potassium-binding subunit">
    <location>
        <begin position="1"/>
        <end position="562"/>
    </location>
</feature>
<feature type="transmembrane region" description="Helical" evidence="1">
    <location>
        <begin position="6"/>
        <end position="26"/>
    </location>
</feature>
<feature type="transmembrane region" description="Helical" evidence="1">
    <location>
        <begin position="62"/>
        <end position="82"/>
    </location>
</feature>
<feature type="transmembrane region" description="Helical" evidence="1">
    <location>
        <begin position="132"/>
        <end position="152"/>
    </location>
</feature>
<feature type="transmembrane region" description="Helical" evidence="1">
    <location>
        <begin position="175"/>
        <end position="195"/>
    </location>
</feature>
<feature type="transmembrane region" description="Helical" evidence="1">
    <location>
        <begin position="253"/>
        <end position="273"/>
    </location>
</feature>
<feature type="transmembrane region" description="Helical" evidence="1">
    <location>
        <begin position="283"/>
        <end position="303"/>
    </location>
</feature>
<feature type="transmembrane region" description="Helical" evidence="1">
    <location>
        <begin position="327"/>
        <end position="347"/>
    </location>
</feature>
<feature type="transmembrane region" description="Helical" evidence="1">
    <location>
        <begin position="356"/>
        <end position="376"/>
    </location>
</feature>
<feature type="transmembrane region" description="Helical" evidence="1">
    <location>
        <begin position="379"/>
        <end position="399"/>
    </location>
</feature>
<feature type="transmembrane region" description="Helical" evidence="1">
    <location>
        <begin position="416"/>
        <end position="436"/>
    </location>
</feature>
<feature type="transmembrane region" description="Helical" evidence="1">
    <location>
        <begin position="483"/>
        <end position="503"/>
    </location>
</feature>
<feature type="transmembrane region" description="Helical" evidence="1">
    <location>
        <begin position="526"/>
        <end position="546"/>
    </location>
</feature>
<dbReference type="EMBL" id="CP001048">
    <property type="protein sequence ID" value="ACC89988.1"/>
    <property type="molecule type" value="Genomic_DNA"/>
</dbReference>
<dbReference type="RefSeq" id="WP_012413865.1">
    <property type="nucleotide sequence ID" value="NZ_CP009780.1"/>
</dbReference>
<dbReference type="SMR" id="B2KA77"/>
<dbReference type="KEGG" id="ypb:YPTS_3031"/>
<dbReference type="PATRIC" id="fig|502801.10.peg.2461"/>
<dbReference type="GO" id="GO:0005886">
    <property type="term" value="C:plasma membrane"/>
    <property type="evidence" value="ECO:0007669"/>
    <property type="project" value="UniProtKB-SubCell"/>
</dbReference>
<dbReference type="GO" id="GO:0008556">
    <property type="term" value="F:P-type potassium transmembrane transporter activity"/>
    <property type="evidence" value="ECO:0007669"/>
    <property type="project" value="InterPro"/>
</dbReference>
<dbReference type="GO" id="GO:0030955">
    <property type="term" value="F:potassium ion binding"/>
    <property type="evidence" value="ECO:0007669"/>
    <property type="project" value="UniProtKB-UniRule"/>
</dbReference>
<dbReference type="HAMAP" id="MF_00275">
    <property type="entry name" value="KdpA"/>
    <property type="match status" value="1"/>
</dbReference>
<dbReference type="InterPro" id="IPR004623">
    <property type="entry name" value="KdpA"/>
</dbReference>
<dbReference type="NCBIfam" id="TIGR00680">
    <property type="entry name" value="kdpA"/>
    <property type="match status" value="1"/>
</dbReference>
<dbReference type="PANTHER" id="PTHR30607">
    <property type="entry name" value="POTASSIUM-TRANSPORTING ATPASE A CHAIN"/>
    <property type="match status" value="1"/>
</dbReference>
<dbReference type="PANTHER" id="PTHR30607:SF2">
    <property type="entry name" value="POTASSIUM-TRANSPORTING ATPASE POTASSIUM-BINDING SUBUNIT"/>
    <property type="match status" value="1"/>
</dbReference>
<dbReference type="Pfam" id="PF03814">
    <property type="entry name" value="KdpA"/>
    <property type="match status" value="1"/>
</dbReference>
<dbReference type="PIRSF" id="PIRSF001294">
    <property type="entry name" value="K_ATPaseA"/>
    <property type="match status" value="1"/>
</dbReference>
<reference key="1">
    <citation type="submission" date="2008-04" db="EMBL/GenBank/DDBJ databases">
        <title>Complete sequence of Yersinia pseudotuberculosis PB1/+.</title>
        <authorList>
            <person name="Copeland A."/>
            <person name="Lucas S."/>
            <person name="Lapidus A."/>
            <person name="Glavina del Rio T."/>
            <person name="Dalin E."/>
            <person name="Tice H."/>
            <person name="Bruce D."/>
            <person name="Goodwin L."/>
            <person name="Pitluck S."/>
            <person name="Munk A.C."/>
            <person name="Brettin T."/>
            <person name="Detter J.C."/>
            <person name="Han C."/>
            <person name="Tapia R."/>
            <person name="Schmutz J."/>
            <person name="Larimer F."/>
            <person name="Land M."/>
            <person name="Hauser L."/>
            <person name="Challacombe J.F."/>
            <person name="Green L."/>
            <person name="Lindler L.E."/>
            <person name="Nikolich M.P."/>
            <person name="Richardson P."/>
        </authorList>
    </citation>
    <scope>NUCLEOTIDE SEQUENCE [LARGE SCALE GENOMIC DNA]</scope>
    <source>
        <strain>PB1/+</strain>
    </source>
</reference>